<feature type="chain" id="PRO_1000080088" description="Large ribosomal subunit protein bL20">
    <location>
        <begin position="1"/>
        <end position="117"/>
    </location>
</feature>
<accession>B0BUJ0</accession>
<name>RL20_RICRO</name>
<keyword id="KW-0687">Ribonucleoprotein</keyword>
<keyword id="KW-0689">Ribosomal protein</keyword>
<keyword id="KW-0694">RNA-binding</keyword>
<keyword id="KW-0699">rRNA-binding</keyword>
<comment type="function">
    <text evidence="1">Binds directly to 23S ribosomal RNA and is necessary for the in vitro assembly process of the 50S ribosomal subunit. It is not involved in the protein synthesizing functions of that subunit.</text>
</comment>
<comment type="similarity">
    <text evidence="1">Belongs to the bacterial ribosomal protein bL20 family.</text>
</comment>
<protein>
    <recommendedName>
        <fullName evidence="1">Large ribosomal subunit protein bL20</fullName>
    </recommendedName>
    <alternativeName>
        <fullName evidence="2">50S ribosomal protein L20</fullName>
    </alternativeName>
</protein>
<dbReference type="EMBL" id="CP000766">
    <property type="protein sequence ID" value="ABY72900.1"/>
    <property type="molecule type" value="Genomic_DNA"/>
</dbReference>
<dbReference type="RefSeq" id="WP_012151091.1">
    <property type="nucleotide sequence ID" value="NC_010263.3"/>
</dbReference>
<dbReference type="SMR" id="B0BUJ0"/>
<dbReference type="GeneID" id="79937607"/>
<dbReference type="KEGG" id="rrj:RrIowa_1110"/>
<dbReference type="eggNOG" id="COG0292">
    <property type="taxonomic scope" value="Bacteria"/>
</dbReference>
<dbReference type="HOGENOM" id="CLU_123265_0_1_5"/>
<dbReference type="Proteomes" id="UP000000796">
    <property type="component" value="Chromosome"/>
</dbReference>
<dbReference type="GO" id="GO:1990904">
    <property type="term" value="C:ribonucleoprotein complex"/>
    <property type="evidence" value="ECO:0007669"/>
    <property type="project" value="UniProtKB-KW"/>
</dbReference>
<dbReference type="GO" id="GO:0005840">
    <property type="term" value="C:ribosome"/>
    <property type="evidence" value="ECO:0007669"/>
    <property type="project" value="UniProtKB-KW"/>
</dbReference>
<dbReference type="GO" id="GO:0019843">
    <property type="term" value="F:rRNA binding"/>
    <property type="evidence" value="ECO:0007669"/>
    <property type="project" value="UniProtKB-UniRule"/>
</dbReference>
<dbReference type="GO" id="GO:0003735">
    <property type="term" value="F:structural constituent of ribosome"/>
    <property type="evidence" value="ECO:0007669"/>
    <property type="project" value="InterPro"/>
</dbReference>
<dbReference type="GO" id="GO:0000027">
    <property type="term" value="P:ribosomal large subunit assembly"/>
    <property type="evidence" value="ECO:0007669"/>
    <property type="project" value="UniProtKB-UniRule"/>
</dbReference>
<dbReference type="GO" id="GO:0006412">
    <property type="term" value="P:translation"/>
    <property type="evidence" value="ECO:0007669"/>
    <property type="project" value="InterPro"/>
</dbReference>
<dbReference type="CDD" id="cd07026">
    <property type="entry name" value="Ribosomal_L20"/>
    <property type="match status" value="1"/>
</dbReference>
<dbReference type="FunFam" id="1.10.1900.20:FF:000001">
    <property type="entry name" value="50S ribosomal protein L20"/>
    <property type="match status" value="1"/>
</dbReference>
<dbReference type="Gene3D" id="6.10.160.10">
    <property type="match status" value="1"/>
</dbReference>
<dbReference type="Gene3D" id="1.10.1900.20">
    <property type="entry name" value="Ribosomal protein L20"/>
    <property type="match status" value="1"/>
</dbReference>
<dbReference type="HAMAP" id="MF_00382">
    <property type="entry name" value="Ribosomal_bL20"/>
    <property type="match status" value="1"/>
</dbReference>
<dbReference type="InterPro" id="IPR005813">
    <property type="entry name" value="Ribosomal_bL20"/>
</dbReference>
<dbReference type="InterPro" id="IPR049946">
    <property type="entry name" value="RIBOSOMAL_L20_CS"/>
</dbReference>
<dbReference type="InterPro" id="IPR035566">
    <property type="entry name" value="Ribosomal_protein_bL20_C"/>
</dbReference>
<dbReference type="NCBIfam" id="TIGR01032">
    <property type="entry name" value="rplT_bact"/>
    <property type="match status" value="1"/>
</dbReference>
<dbReference type="PANTHER" id="PTHR10986">
    <property type="entry name" value="39S RIBOSOMAL PROTEIN L20"/>
    <property type="match status" value="1"/>
</dbReference>
<dbReference type="Pfam" id="PF00453">
    <property type="entry name" value="Ribosomal_L20"/>
    <property type="match status" value="1"/>
</dbReference>
<dbReference type="PRINTS" id="PR00062">
    <property type="entry name" value="RIBOSOMALL20"/>
</dbReference>
<dbReference type="SUPFAM" id="SSF74731">
    <property type="entry name" value="Ribosomal protein L20"/>
    <property type="match status" value="1"/>
</dbReference>
<dbReference type="PROSITE" id="PS00937">
    <property type="entry name" value="RIBOSOMAL_L20"/>
    <property type="match status" value="1"/>
</dbReference>
<organism>
    <name type="scientific">Rickettsia rickettsii (strain Iowa)</name>
    <dbReference type="NCBI Taxonomy" id="452659"/>
    <lineage>
        <taxon>Bacteria</taxon>
        <taxon>Pseudomonadati</taxon>
        <taxon>Pseudomonadota</taxon>
        <taxon>Alphaproteobacteria</taxon>
        <taxon>Rickettsiales</taxon>
        <taxon>Rickettsiaceae</taxon>
        <taxon>Rickettsieae</taxon>
        <taxon>Rickettsia</taxon>
        <taxon>spotted fever group</taxon>
    </lineage>
</organism>
<proteinExistence type="inferred from homology"/>
<sequence>MTRAKSGKISKNRHKKILKLAKGYRGRANSCFRVAIEKVEKALQYAYRDRRNRKRDFRGLWIQRINAAVREHGLVYSQFMGALKKTEIAIDRKVLAELAVNNSDGFVSIVEKAKAHI</sequence>
<gene>
    <name evidence="1" type="primary">rplT</name>
    <name type="ordered locus">RrIowa_1110</name>
</gene>
<evidence type="ECO:0000255" key="1">
    <source>
        <dbReference type="HAMAP-Rule" id="MF_00382"/>
    </source>
</evidence>
<evidence type="ECO:0000305" key="2"/>
<reference key="1">
    <citation type="journal article" date="2008" name="Infect. Immun.">
        <title>Genomic comparison of virulent Rickettsia rickettsii Sheila Smith and avirulent Rickettsia rickettsii Iowa.</title>
        <authorList>
            <person name="Ellison D.W."/>
            <person name="Clark T.R."/>
            <person name="Sturdevant D.E."/>
            <person name="Virtaneva K."/>
            <person name="Porcella S.F."/>
            <person name="Hackstadt T."/>
        </authorList>
    </citation>
    <scope>NUCLEOTIDE SEQUENCE [LARGE SCALE GENOMIC DNA]</scope>
    <source>
        <strain>Iowa</strain>
    </source>
</reference>